<name>HSCB_VIBCM</name>
<dbReference type="EMBL" id="CP001233">
    <property type="protein sequence ID" value="ACP05030.1"/>
    <property type="molecule type" value="Genomic_DNA"/>
</dbReference>
<dbReference type="RefSeq" id="WP_001105749.1">
    <property type="nucleotide sequence ID" value="NC_012578.1"/>
</dbReference>
<dbReference type="SMR" id="C3LT04"/>
<dbReference type="GeneID" id="69720499"/>
<dbReference type="KEGG" id="vcm:VCM66_0709"/>
<dbReference type="HOGENOM" id="CLU_068529_2_0_6"/>
<dbReference type="Proteomes" id="UP000001217">
    <property type="component" value="Chromosome I"/>
</dbReference>
<dbReference type="GO" id="GO:1990230">
    <property type="term" value="C:iron-sulfur cluster transfer complex"/>
    <property type="evidence" value="ECO:0007669"/>
    <property type="project" value="TreeGrafter"/>
</dbReference>
<dbReference type="GO" id="GO:0001671">
    <property type="term" value="F:ATPase activator activity"/>
    <property type="evidence" value="ECO:0007669"/>
    <property type="project" value="InterPro"/>
</dbReference>
<dbReference type="GO" id="GO:0051087">
    <property type="term" value="F:protein-folding chaperone binding"/>
    <property type="evidence" value="ECO:0007669"/>
    <property type="project" value="InterPro"/>
</dbReference>
<dbReference type="GO" id="GO:0044571">
    <property type="term" value="P:[2Fe-2S] cluster assembly"/>
    <property type="evidence" value="ECO:0007669"/>
    <property type="project" value="InterPro"/>
</dbReference>
<dbReference type="GO" id="GO:0051259">
    <property type="term" value="P:protein complex oligomerization"/>
    <property type="evidence" value="ECO:0007669"/>
    <property type="project" value="InterPro"/>
</dbReference>
<dbReference type="GO" id="GO:0006457">
    <property type="term" value="P:protein folding"/>
    <property type="evidence" value="ECO:0007669"/>
    <property type="project" value="UniProtKB-UniRule"/>
</dbReference>
<dbReference type="CDD" id="cd06257">
    <property type="entry name" value="DnaJ"/>
    <property type="match status" value="1"/>
</dbReference>
<dbReference type="Gene3D" id="1.10.287.110">
    <property type="entry name" value="DnaJ domain"/>
    <property type="match status" value="1"/>
</dbReference>
<dbReference type="Gene3D" id="1.20.1280.20">
    <property type="entry name" value="HscB, C-terminal domain"/>
    <property type="match status" value="1"/>
</dbReference>
<dbReference type="HAMAP" id="MF_00682">
    <property type="entry name" value="HscB"/>
    <property type="match status" value="1"/>
</dbReference>
<dbReference type="InterPro" id="IPR001623">
    <property type="entry name" value="DnaJ_domain"/>
</dbReference>
<dbReference type="InterPro" id="IPR004640">
    <property type="entry name" value="HscB"/>
</dbReference>
<dbReference type="InterPro" id="IPR036386">
    <property type="entry name" value="HscB_C_sf"/>
</dbReference>
<dbReference type="InterPro" id="IPR009073">
    <property type="entry name" value="HscB_oligo_C"/>
</dbReference>
<dbReference type="InterPro" id="IPR036869">
    <property type="entry name" value="J_dom_sf"/>
</dbReference>
<dbReference type="NCBIfam" id="TIGR00714">
    <property type="entry name" value="hscB"/>
    <property type="match status" value="1"/>
</dbReference>
<dbReference type="NCBIfam" id="NF003449">
    <property type="entry name" value="PRK05014.1"/>
    <property type="match status" value="1"/>
</dbReference>
<dbReference type="PANTHER" id="PTHR14021">
    <property type="entry name" value="IRON-SULFUR CLUSTER CO-CHAPERONE PROTEIN HSCB"/>
    <property type="match status" value="1"/>
</dbReference>
<dbReference type="PANTHER" id="PTHR14021:SF15">
    <property type="entry name" value="IRON-SULFUR CLUSTER CO-CHAPERONE PROTEIN HSCB"/>
    <property type="match status" value="1"/>
</dbReference>
<dbReference type="Pfam" id="PF07743">
    <property type="entry name" value="HSCB_C"/>
    <property type="match status" value="1"/>
</dbReference>
<dbReference type="SMART" id="SM00271">
    <property type="entry name" value="DnaJ"/>
    <property type="match status" value="1"/>
</dbReference>
<dbReference type="SUPFAM" id="SSF46565">
    <property type="entry name" value="Chaperone J-domain"/>
    <property type="match status" value="1"/>
</dbReference>
<dbReference type="SUPFAM" id="SSF47144">
    <property type="entry name" value="HSC20 (HSCB), C-terminal oligomerisation domain"/>
    <property type="match status" value="1"/>
</dbReference>
<dbReference type="PROSITE" id="PS50076">
    <property type="entry name" value="DNAJ_2"/>
    <property type="match status" value="1"/>
</dbReference>
<gene>
    <name evidence="1" type="primary">hscB</name>
    <name type="ordered locus">VCM66_0709</name>
</gene>
<protein>
    <recommendedName>
        <fullName evidence="1">Co-chaperone protein HscB homolog</fullName>
    </recommendedName>
</protein>
<proteinExistence type="inferred from homology"/>
<evidence type="ECO:0000255" key="1">
    <source>
        <dbReference type="HAMAP-Rule" id="MF_00682"/>
    </source>
</evidence>
<accession>C3LT04</accession>
<keyword id="KW-0143">Chaperone</keyword>
<reference key="1">
    <citation type="journal article" date="2008" name="PLoS ONE">
        <title>A recalibrated molecular clock and independent origins for the cholera pandemic clones.</title>
        <authorList>
            <person name="Feng L."/>
            <person name="Reeves P.R."/>
            <person name="Lan R."/>
            <person name="Ren Y."/>
            <person name="Gao C."/>
            <person name="Zhou Z."/>
            <person name="Ren Y."/>
            <person name="Cheng J."/>
            <person name="Wang W."/>
            <person name="Wang J."/>
            <person name="Qian W."/>
            <person name="Li D."/>
            <person name="Wang L."/>
        </authorList>
    </citation>
    <scope>NUCLEOTIDE SEQUENCE [LARGE SCALE GENOMIC DNA]</scope>
    <source>
        <strain>M66-2</strain>
    </source>
</reference>
<sequence length="171" mass="19631">MNYFELFGLPIQFELDGSLLSSQFRALQKRFHPDNFATASERDRLMAVQQAAQINDAYQTLKDSLRRAEYLLSLQGIEMKAEQQTLQDPMFLMEQMELREELESVTACADPEAALVAFDTKVTAMQRHYLAQLQGQLAQSEWLAAADQIRKLKFIAKLKNEVERVEDQLLG</sequence>
<feature type="chain" id="PRO_1000189917" description="Co-chaperone protein HscB homolog">
    <location>
        <begin position="1"/>
        <end position="171"/>
    </location>
</feature>
<feature type="domain" description="J" evidence="1">
    <location>
        <begin position="2"/>
        <end position="74"/>
    </location>
</feature>
<comment type="function">
    <text evidence="1">Co-chaperone involved in the maturation of iron-sulfur cluster-containing proteins. Seems to help targeting proteins to be folded toward HscA.</text>
</comment>
<comment type="subunit">
    <text evidence="1">Interacts with HscA and stimulates its ATPase activity.</text>
</comment>
<comment type="similarity">
    <text evidence="1">Belongs to the HscB family.</text>
</comment>
<organism>
    <name type="scientific">Vibrio cholerae serotype O1 (strain M66-2)</name>
    <dbReference type="NCBI Taxonomy" id="579112"/>
    <lineage>
        <taxon>Bacteria</taxon>
        <taxon>Pseudomonadati</taxon>
        <taxon>Pseudomonadota</taxon>
        <taxon>Gammaproteobacteria</taxon>
        <taxon>Vibrionales</taxon>
        <taxon>Vibrionaceae</taxon>
        <taxon>Vibrio</taxon>
    </lineage>
</organism>